<protein>
    <recommendedName>
        <fullName evidence="1">Small ribosomal subunit protein uS4</fullName>
    </recommendedName>
    <alternativeName>
        <fullName evidence="3">30S ribosomal protein S4</fullName>
    </alternativeName>
</protein>
<dbReference type="EMBL" id="AE015928">
    <property type="protein sequence ID" value="AAO77808.1"/>
    <property type="molecule type" value="Genomic_DNA"/>
</dbReference>
<dbReference type="RefSeq" id="NP_811614.1">
    <property type="nucleotide sequence ID" value="NC_004663.1"/>
</dbReference>
<dbReference type="RefSeq" id="WP_008762050.1">
    <property type="nucleotide sequence ID" value="NZ_UYXG01000001.1"/>
</dbReference>
<dbReference type="SMR" id="Q8A4A1"/>
<dbReference type="FunCoup" id="Q8A4A1">
    <property type="interactions" value="652"/>
</dbReference>
<dbReference type="STRING" id="226186.BT_2702"/>
<dbReference type="PaxDb" id="226186-BT_2702"/>
<dbReference type="EnsemblBacteria" id="AAO77808">
    <property type="protein sequence ID" value="AAO77808"/>
    <property type="gene ID" value="BT_2702"/>
</dbReference>
<dbReference type="GeneID" id="69587561"/>
<dbReference type="KEGG" id="bth:BT_2702"/>
<dbReference type="PATRIC" id="fig|226186.12.peg.2744"/>
<dbReference type="eggNOG" id="COG0522">
    <property type="taxonomic scope" value="Bacteria"/>
</dbReference>
<dbReference type="HOGENOM" id="CLU_092403_0_2_10"/>
<dbReference type="InParanoid" id="Q8A4A1"/>
<dbReference type="OrthoDB" id="9803672at2"/>
<dbReference type="Proteomes" id="UP000001414">
    <property type="component" value="Chromosome"/>
</dbReference>
<dbReference type="GO" id="GO:0015935">
    <property type="term" value="C:small ribosomal subunit"/>
    <property type="evidence" value="ECO:0000318"/>
    <property type="project" value="GO_Central"/>
</dbReference>
<dbReference type="GO" id="GO:0019843">
    <property type="term" value="F:rRNA binding"/>
    <property type="evidence" value="ECO:0000318"/>
    <property type="project" value="GO_Central"/>
</dbReference>
<dbReference type="GO" id="GO:0003735">
    <property type="term" value="F:structural constituent of ribosome"/>
    <property type="evidence" value="ECO:0000318"/>
    <property type="project" value="GO_Central"/>
</dbReference>
<dbReference type="GO" id="GO:0042274">
    <property type="term" value="P:ribosomal small subunit biogenesis"/>
    <property type="evidence" value="ECO:0000318"/>
    <property type="project" value="GO_Central"/>
</dbReference>
<dbReference type="GO" id="GO:0006412">
    <property type="term" value="P:translation"/>
    <property type="evidence" value="ECO:0007669"/>
    <property type="project" value="UniProtKB-UniRule"/>
</dbReference>
<dbReference type="CDD" id="cd00165">
    <property type="entry name" value="S4"/>
    <property type="match status" value="1"/>
</dbReference>
<dbReference type="FunFam" id="1.10.1050.10:FF:000001">
    <property type="entry name" value="30S ribosomal protein S4"/>
    <property type="match status" value="1"/>
</dbReference>
<dbReference type="FunFam" id="3.10.290.10:FF:000001">
    <property type="entry name" value="30S ribosomal protein S4"/>
    <property type="match status" value="1"/>
</dbReference>
<dbReference type="Gene3D" id="1.10.1050.10">
    <property type="entry name" value="Ribosomal Protein S4 Delta 41, Chain A, domain 1"/>
    <property type="match status" value="1"/>
</dbReference>
<dbReference type="Gene3D" id="3.10.290.10">
    <property type="entry name" value="RNA-binding S4 domain"/>
    <property type="match status" value="1"/>
</dbReference>
<dbReference type="HAMAP" id="MF_01306_B">
    <property type="entry name" value="Ribosomal_uS4_B"/>
    <property type="match status" value="1"/>
</dbReference>
<dbReference type="InterPro" id="IPR022801">
    <property type="entry name" value="Ribosomal_uS4"/>
</dbReference>
<dbReference type="InterPro" id="IPR005709">
    <property type="entry name" value="Ribosomal_uS4_bac-type"/>
</dbReference>
<dbReference type="InterPro" id="IPR018079">
    <property type="entry name" value="Ribosomal_uS4_CS"/>
</dbReference>
<dbReference type="InterPro" id="IPR001912">
    <property type="entry name" value="Ribosomal_uS4_N"/>
</dbReference>
<dbReference type="InterPro" id="IPR002942">
    <property type="entry name" value="S4_RNA-bd"/>
</dbReference>
<dbReference type="InterPro" id="IPR036986">
    <property type="entry name" value="S4_RNA-bd_sf"/>
</dbReference>
<dbReference type="NCBIfam" id="NF003717">
    <property type="entry name" value="PRK05327.1"/>
    <property type="match status" value="1"/>
</dbReference>
<dbReference type="NCBIfam" id="TIGR01017">
    <property type="entry name" value="rpsD_bact"/>
    <property type="match status" value="1"/>
</dbReference>
<dbReference type="PANTHER" id="PTHR11831">
    <property type="entry name" value="30S 40S RIBOSOMAL PROTEIN"/>
    <property type="match status" value="1"/>
</dbReference>
<dbReference type="PANTHER" id="PTHR11831:SF4">
    <property type="entry name" value="SMALL RIBOSOMAL SUBUNIT PROTEIN US4M"/>
    <property type="match status" value="1"/>
</dbReference>
<dbReference type="Pfam" id="PF00163">
    <property type="entry name" value="Ribosomal_S4"/>
    <property type="match status" value="1"/>
</dbReference>
<dbReference type="Pfam" id="PF01479">
    <property type="entry name" value="S4"/>
    <property type="match status" value="1"/>
</dbReference>
<dbReference type="SMART" id="SM01390">
    <property type="entry name" value="Ribosomal_S4"/>
    <property type="match status" value="1"/>
</dbReference>
<dbReference type="SMART" id="SM00363">
    <property type="entry name" value="S4"/>
    <property type="match status" value="1"/>
</dbReference>
<dbReference type="SUPFAM" id="SSF55174">
    <property type="entry name" value="Alpha-L RNA-binding motif"/>
    <property type="match status" value="1"/>
</dbReference>
<dbReference type="PROSITE" id="PS00632">
    <property type="entry name" value="RIBOSOMAL_S4"/>
    <property type="match status" value="1"/>
</dbReference>
<dbReference type="PROSITE" id="PS50889">
    <property type="entry name" value="S4"/>
    <property type="match status" value="1"/>
</dbReference>
<comment type="function">
    <text evidence="1">One of the primary rRNA binding proteins, it binds directly to 16S rRNA where it nucleates assembly of the body of the 30S subunit.</text>
</comment>
<comment type="function">
    <text evidence="1">With S5 and S12 plays an important role in translational accuracy.</text>
</comment>
<comment type="subunit">
    <text evidence="1">Part of the 30S ribosomal subunit. Contacts protein S5. The interaction surface between S4 and S5 is involved in control of translational fidelity.</text>
</comment>
<comment type="similarity">
    <text evidence="1">Belongs to the universal ribosomal protein uS4 family.</text>
</comment>
<organism>
    <name type="scientific">Bacteroides thetaiotaomicron (strain ATCC 29148 / DSM 2079 / JCM 5827 / CCUG 10774 / NCTC 10582 / VPI-5482 / E50)</name>
    <dbReference type="NCBI Taxonomy" id="226186"/>
    <lineage>
        <taxon>Bacteria</taxon>
        <taxon>Pseudomonadati</taxon>
        <taxon>Bacteroidota</taxon>
        <taxon>Bacteroidia</taxon>
        <taxon>Bacteroidales</taxon>
        <taxon>Bacteroidaceae</taxon>
        <taxon>Bacteroides</taxon>
    </lineage>
</organism>
<reference key="1">
    <citation type="journal article" date="2003" name="Science">
        <title>A genomic view of the human-Bacteroides thetaiotaomicron symbiosis.</title>
        <authorList>
            <person name="Xu J."/>
            <person name="Bjursell M.K."/>
            <person name="Himrod J."/>
            <person name="Deng S."/>
            <person name="Carmichael L.K."/>
            <person name="Chiang H.C."/>
            <person name="Hooper L.V."/>
            <person name="Gordon J.I."/>
        </authorList>
    </citation>
    <scope>NUCLEOTIDE SEQUENCE [LARGE SCALE GENOMIC DNA]</scope>
    <source>
        <strain>ATCC 29148 / DSM 2079 / JCM 5827 / CCUG 10774 / NCTC 10582 / VPI-5482 / E50</strain>
    </source>
</reference>
<sequence>MARYTGPKSRIARKFGEGIFGADKVLSKKNYPPGQHGNSRKRKTSEYGVQLREKQKAKYTYGVLEKQFRNLFEKAATAKGITGEVLLQLLEGRLDNVVFRLGIAPTRAAARQLVSHKHITVDGEVVNIPSFAVKPGQLIGVRERSKSLEVIANSLAGFNHSKYAWLEWDETSKVGKMLHIPERADIPENIKEHLIVELYSK</sequence>
<evidence type="ECO:0000255" key="1">
    <source>
        <dbReference type="HAMAP-Rule" id="MF_01306"/>
    </source>
</evidence>
<evidence type="ECO:0000256" key="2">
    <source>
        <dbReference type="SAM" id="MobiDB-lite"/>
    </source>
</evidence>
<evidence type="ECO:0000305" key="3"/>
<accession>Q8A4A1</accession>
<proteinExistence type="inferred from homology"/>
<gene>
    <name evidence="1" type="primary">rpsD</name>
    <name type="ordered locus">BT_2702</name>
</gene>
<name>RS4_BACTN</name>
<feature type="chain" id="PRO_0000132340" description="Small ribosomal subunit protein uS4">
    <location>
        <begin position="1"/>
        <end position="201"/>
    </location>
</feature>
<feature type="domain" description="S4 RNA-binding" evidence="1">
    <location>
        <begin position="92"/>
        <end position="155"/>
    </location>
</feature>
<feature type="region of interest" description="Disordered" evidence="2">
    <location>
        <begin position="26"/>
        <end position="48"/>
    </location>
</feature>
<keyword id="KW-1185">Reference proteome</keyword>
<keyword id="KW-0687">Ribonucleoprotein</keyword>
<keyword id="KW-0689">Ribosomal protein</keyword>
<keyword id="KW-0694">RNA-binding</keyword>
<keyword id="KW-0699">rRNA-binding</keyword>